<proteinExistence type="evidence at protein level"/>
<dbReference type="EMBL" id="AC005489">
    <property type="protein sequence ID" value="AAD32877.1"/>
    <property type="molecule type" value="Genomic_DNA"/>
</dbReference>
<dbReference type="EMBL" id="CP002684">
    <property type="protein sequence ID" value="AEE28560.1"/>
    <property type="molecule type" value="Genomic_DNA"/>
</dbReference>
<dbReference type="PIR" id="A86237">
    <property type="entry name" value="A86237"/>
</dbReference>
<dbReference type="RefSeq" id="NP_172498.1">
    <property type="nucleotide sequence ID" value="NM_100901.3"/>
</dbReference>
<dbReference type="SMR" id="Q9SY69"/>
<dbReference type="BioGRID" id="22806">
    <property type="interactions" value="1"/>
</dbReference>
<dbReference type="FunCoup" id="Q9SY69">
    <property type="interactions" value="498"/>
</dbReference>
<dbReference type="IntAct" id="Q9SY69">
    <property type="interactions" value="1"/>
</dbReference>
<dbReference type="STRING" id="3702.Q9SY69"/>
<dbReference type="PaxDb" id="3702-AT1G10270.1"/>
<dbReference type="ProteomicsDB" id="226491"/>
<dbReference type="EnsemblPlants" id="AT1G10270.1">
    <property type="protein sequence ID" value="AT1G10270.1"/>
    <property type="gene ID" value="AT1G10270"/>
</dbReference>
<dbReference type="GeneID" id="837566"/>
<dbReference type="Gramene" id="AT1G10270.1">
    <property type="protein sequence ID" value="AT1G10270.1"/>
    <property type="gene ID" value="AT1G10270"/>
</dbReference>
<dbReference type="KEGG" id="ath:AT1G10270"/>
<dbReference type="Araport" id="AT1G10270"/>
<dbReference type="TAIR" id="AT1G10270">
    <property type="gene designation" value="GRP23"/>
</dbReference>
<dbReference type="eggNOG" id="KOG4197">
    <property type="taxonomic scope" value="Eukaryota"/>
</dbReference>
<dbReference type="HOGENOM" id="CLU_012783_2_0_1"/>
<dbReference type="InParanoid" id="Q9SY69"/>
<dbReference type="OMA" id="QQPWANQ"/>
<dbReference type="PhylomeDB" id="Q9SY69"/>
<dbReference type="PRO" id="PR:Q9SY69"/>
<dbReference type="Proteomes" id="UP000006548">
    <property type="component" value="Chromosome 1"/>
</dbReference>
<dbReference type="ExpressionAtlas" id="Q9SY69">
    <property type="expression patterns" value="baseline and differential"/>
</dbReference>
<dbReference type="GO" id="GO:0005739">
    <property type="term" value="C:mitochondrion"/>
    <property type="evidence" value="ECO:0007005"/>
    <property type="project" value="TAIR"/>
</dbReference>
<dbReference type="GO" id="GO:0005634">
    <property type="term" value="C:nucleus"/>
    <property type="evidence" value="ECO:0000314"/>
    <property type="project" value="TAIR"/>
</dbReference>
<dbReference type="GO" id="GO:0051301">
    <property type="term" value="P:cell division"/>
    <property type="evidence" value="ECO:0000315"/>
    <property type="project" value="TAIR"/>
</dbReference>
<dbReference type="GO" id="GO:0009793">
    <property type="term" value="P:embryo development ending in seed dormancy"/>
    <property type="evidence" value="ECO:0000315"/>
    <property type="project" value="TAIR"/>
</dbReference>
<dbReference type="FunFam" id="1.25.40.10:FF:002335">
    <property type="entry name" value="Glutamine-rich protein23"/>
    <property type="match status" value="1"/>
</dbReference>
<dbReference type="FunFam" id="1.25.40.10:FF:000922">
    <property type="entry name" value="Pentatricopeptide repeat-containing protein"/>
    <property type="match status" value="1"/>
</dbReference>
<dbReference type="FunFam" id="1.25.40.10:FF:001465">
    <property type="entry name" value="Pentatricopeptide repeat-containing protein"/>
    <property type="match status" value="1"/>
</dbReference>
<dbReference type="Gene3D" id="1.25.40.10">
    <property type="entry name" value="Tetratricopeptide repeat domain"/>
    <property type="match status" value="3"/>
</dbReference>
<dbReference type="InterPro" id="IPR002885">
    <property type="entry name" value="Pentatricopeptide_rpt"/>
</dbReference>
<dbReference type="InterPro" id="IPR052308">
    <property type="entry name" value="PPR_domain-containing"/>
</dbReference>
<dbReference type="InterPro" id="IPR011990">
    <property type="entry name" value="TPR-like_helical_dom_sf"/>
</dbReference>
<dbReference type="InterPro" id="IPR019734">
    <property type="entry name" value="TPR_rpt"/>
</dbReference>
<dbReference type="NCBIfam" id="TIGR00756">
    <property type="entry name" value="PPR"/>
    <property type="match status" value="4"/>
</dbReference>
<dbReference type="PANTHER" id="PTHR47937:SF2">
    <property type="entry name" value="PENTATRICOPEPTIDE (PPR) REPEAT-CONTAINING PROTEIN, PF01535'-RELATED"/>
    <property type="match status" value="1"/>
</dbReference>
<dbReference type="PANTHER" id="PTHR47937">
    <property type="entry name" value="PLASTID TRANSCRIPTIONALLY ACTIVE CHROMOSOME 2-LIKE PROTEIN"/>
    <property type="match status" value="1"/>
</dbReference>
<dbReference type="Pfam" id="PF01535">
    <property type="entry name" value="PPR"/>
    <property type="match status" value="4"/>
</dbReference>
<dbReference type="Pfam" id="PF12854">
    <property type="entry name" value="PPR_1"/>
    <property type="match status" value="1"/>
</dbReference>
<dbReference type="SMART" id="SM00028">
    <property type="entry name" value="TPR"/>
    <property type="match status" value="2"/>
</dbReference>
<dbReference type="SUPFAM" id="SSF81901">
    <property type="entry name" value="HCP-like"/>
    <property type="match status" value="1"/>
</dbReference>
<dbReference type="SUPFAM" id="SSF48452">
    <property type="entry name" value="TPR-like"/>
    <property type="match status" value="1"/>
</dbReference>
<dbReference type="PROSITE" id="PS51375">
    <property type="entry name" value="PPR"/>
    <property type="match status" value="10"/>
</dbReference>
<protein>
    <recommendedName>
        <fullName>Pentatricopeptide repeat-containing protein At1g10270</fullName>
    </recommendedName>
    <alternativeName>
        <fullName>Protein GLUTAMINE-RICH PROTEIN 23</fullName>
    </alternativeName>
</protein>
<comment type="function">
    <text evidence="3">May function as a transcriptional regulator essential for early embryogenesis.</text>
</comment>
<comment type="subunit">
    <text evidence="3">Interacts with RPB36B through its WQQ domain.</text>
</comment>
<comment type="interaction">
    <interactant intactId="EBI-1769617">
        <id>Q9SY69</id>
    </interactant>
    <interactant intactId="EBI-1769627">
        <id>Q39212</id>
        <label>NRPD3B</label>
    </interactant>
    <organismsDiffer>false</organismsDiffer>
    <experiments>3</experiments>
</comment>
<comment type="subcellular location">
    <subcellularLocation>
        <location evidence="3">Nucleus</location>
    </subcellularLocation>
</comment>
<comment type="tissue specificity">
    <text evidence="3">Ubiquitous but preferentially expressed in gametophytes and young embryos.</text>
</comment>
<comment type="developmental stage">
    <text evidence="3">Expressed in developing embryos up to the heart stage.</text>
</comment>
<comment type="domain">
    <text>The WQQ domain consists of a repetition of W-x(2)-Q-x(4)-Q-x(2) motifs.</text>
</comment>
<comment type="similarity">
    <text evidence="4">Belongs to the PPR family. P subfamily.</text>
</comment>
<comment type="online information" name="Pentatricopeptide repeat proteins">
    <link uri="https://ppr.plantenergy.uwa.edu.au"/>
</comment>
<organism>
    <name type="scientific">Arabidopsis thaliana</name>
    <name type="common">Mouse-ear cress</name>
    <dbReference type="NCBI Taxonomy" id="3702"/>
    <lineage>
        <taxon>Eukaryota</taxon>
        <taxon>Viridiplantae</taxon>
        <taxon>Streptophyta</taxon>
        <taxon>Embryophyta</taxon>
        <taxon>Tracheophyta</taxon>
        <taxon>Spermatophyta</taxon>
        <taxon>Magnoliopsida</taxon>
        <taxon>eudicotyledons</taxon>
        <taxon>Gunneridae</taxon>
        <taxon>Pentapetalae</taxon>
        <taxon>rosids</taxon>
        <taxon>malvids</taxon>
        <taxon>Brassicales</taxon>
        <taxon>Brassicaceae</taxon>
        <taxon>Camelineae</taxon>
        <taxon>Arabidopsis</taxon>
    </lineage>
</organism>
<sequence length="913" mass="102093">MSLSHLLRRLCTTTTTTRSPLSISFLHQRIHNISLSPANEDPETTTGNNQDSEKYPNLNPIPNDPSQFQIPQNHTPPIPYPPIPHRTMAFSSAEEAAAERRRRKRRLRIEPPLHALRRDPSAPPPKRDPNAPRLPDSTSALVGQRLNLHNRVQSLIRASDLDAASKLARQSVFSNTRPTVFTCNAIIAAMYRAKRYSESISLFQYFFKQSNIVPNVVSYNQIINAHCDEGNVDEALEVYRHILANAPFAPSSVTYRHLTKGLVQAGRIGDAASLLREMLSKGQAADSTVYNNLIRGYLDLGDFDKAVEFFDELKSKCTVYDGIVNATFMEYWFEKGNDKEAMESYRSLLDKKFRMHPPTGNVLLEVFLKFGKKDEAWALFNEMLDNHAPPNILSVNSDTVGIMVNECFKMGEFSEAINTFKKVGSKVTSKPFVMDYLGYCNIVTRFCEQGMLTEAERFFAEGVSRSLPADAPSHRAMIDAYLKAERIDDAVKMLDRMVDVNLRVVADFGARVFGELIKNGKLTESAEVLTKMGEREPKPDPSIYDVVVRGLCDGDALDQAKDIVGEMIRHNVGVTTVLREFIIEVFEKAGRREEIEKILNSVARPVRNAGQSGNTPPRVPAVFGTTPAAPQQPRDRAPWTSQGVVHSNSGWANGTAGQTAGGAYKANNGQNPSWSNTSDNQQQQSWSNQTAGQQPPSWSRQAPGYQQQQSWSQQSGWSSPSGHQQSWTNQTAGQQQPWANQTPGQQQQWANQTPGQQQQLANQTPGQQQQWANQTPGQQQQWANQNNGHQQPWANQNTGHQQSWANQTPSQQQPWANQTTGQQQGWGNQTTGQQQQWANQTAGQQSGWTAQQQWSNQTASHQQSQWLNPVPGEVANQTPWSNSVDSHLPQQQEPGPSHECQETQEKKVVELRN</sequence>
<evidence type="ECO:0000255" key="1"/>
<evidence type="ECO:0000256" key="2">
    <source>
        <dbReference type="SAM" id="MobiDB-lite"/>
    </source>
</evidence>
<evidence type="ECO:0000269" key="3">
    <source>
    </source>
</evidence>
<evidence type="ECO:0000305" key="4"/>
<accession>Q9SY69</accession>
<name>PPR29_ARATH</name>
<keyword id="KW-0539">Nucleus</keyword>
<keyword id="KW-1185">Reference proteome</keyword>
<keyword id="KW-0677">Repeat</keyword>
<keyword id="KW-0804">Transcription</keyword>
<keyword id="KW-0805">Transcription regulation</keyword>
<feature type="chain" id="PRO_0000342770" description="Pentatricopeptide repeat-containing protein At1g10270">
    <location>
        <begin position="1"/>
        <end position="913"/>
    </location>
</feature>
<feature type="repeat" description="PPR 1">
    <location>
        <begin position="179"/>
        <end position="214"/>
    </location>
</feature>
<feature type="repeat" description="PPR 2">
    <location>
        <begin position="215"/>
        <end position="250"/>
    </location>
</feature>
<feature type="repeat" description="PPR 3">
    <location>
        <begin position="251"/>
        <end position="285"/>
    </location>
</feature>
<feature type="repeat" description="PPR 4">
    <location>
        <begin position="286"/>
        <end position="316"/>
    </location>
</feature>
<feature type="repeat" description="PPR 5">
    <location>
        <begin position="321"/>
        <end position="355"/>
    </location>
</feature>
<feature type="repeat" description="PPR 6">
    <location>
        <begin position="356"/>
        <end position="390"/>
    </location>
</feature>
<feature type="repeat" description="PPR 7">
    <location>
        <begin position="396"/>
        <end position="426"/>
    </location>
</feature>
<feature type="repeat" description="PPR 8">
    <location>
        <begin position="435"/>
        <end position="469"/>
    </location>
</feature>
<feature type="repeat" description="PPR 9">
    <location>
        <begin position="470"/>
        <end position="504"/>
    </location>
</feature>
<feature type="repeat" description="PPR 10">
    <location>
        <begin position="505"/>
        <end position="539"/>
    </location>
</feature>
<feature type="repeat" description="PPR 11">
    <location>
        <begin position="540"/>
        <end position="574"/>
    </location>
</feature>
<feature type="region of interest" description="Disordered" evidence="2">
    <location>
        <begin position="34"/>
        <end position="138"/>
    </location>
</feature>
<feature type="region of interest" description="Leucine-zipper" evidence="1">
    <location>
        <begin position="134"/>
        <end position="167"/>
    </location>
</feature>
<feature type="region of interest" description="Disordered" evidence="2">
    <location>
        <begin position="607"/>
        <end position="913"/>
    </location>
</feature>
<feature type="region of interest" description="14 X 11 AA approximate tandem repeats of W-x(2)-Q-x(4)-Q-x(2)">
    <location>
        <begin position="674"/>
        <end position="858"/>
    </location>
</feature>
<feature type="short sequence motif" description="Nuclear localization signal" evidence="1">
    <location>
        <begin position="99"/>
        <end position="108"/>
    </location>
</feature>
<feature type="compositionally biased region" description="Polar residues" evidence="2">
    <location>
        <begin position="64"/>
        <end position="73"/>
    </location>
</feature>
<feature type="compositionally biased region" description="Pro residues" evidence="2">
    <location>
        <begin position="74"/>
        <end position="84"/>
    </location>
</feature>
<feature type="compositionally biased region" description="Basic and acidic residues" evidence="2">
    <location>
        <begin position="108"/>
        <end position="130"/>
    </location>
</feature>
<feature type="compositionally biased region" description="Polar residues" evidence="2">
    <location>
        <begin position="639"/>
        <end position="649"/>
    </location>
</feature>
<feature type="compositionally biased region" description="Low complexity" evidence="2">
    <location>
        <begin position="650"/>
        <end position="666"/>
    </location>
</feature>
<feature type="compositionally biased region" description="Low complexity" evidence="2">
    <location>
        <begin position="673"/>
        <end position="690"/>
    </location>
</feature>
<feature type="compositionally biased region" description="Polar residues" evidence="2">
    <location>
        <begin position="691"/>
        <end position="700"/>
    </location>
</feature>
<feature type="compositionally biased region" description="Low complexity" evidence="2">
    <location>
        <begin position="706"/>
        <end position="727"/>
    </location>
</feature>
<feature type="compositionally biased region" description="Polar residues" evidence="2">
    <location>
        <begin position="728"/>
        <end position="761"/>
    </location>
</feature>
<feature type="compositionally biased region" description="Low complexity" evidence="2">
    <location>
        <begin position="762"/>
        <end position="791"/>
    </location>
</feature>
<feature type="compositionally biased region" description="Polar residues" evidence="2">
    <location>
        <begin position="792"/>
        <end position="814"/>
    </location>
</feature>
<feature type="compositionally biased region" description="Low complexity" evidence="2">
    <location>
        <begin position="815"/>
        <end position="845"/>
    </location>
</feature>
<feature type="compositionally biased region" description="Polar residues" evidence="2">
    <location>
        <begin position="846"/>
        <end position="867"/>
    </location>
</feature>
<feature type="compositionally biased region" description="Polar residues" evidence="2">
    <location>
        <begin position="875"/>
        <end position="894"/>
    </location>
</feature>
<feature type="compositionally biased region" description="Basic and acidic residues" evidence="2">
    <location>
        <begin position="899"/>
        <end position="913"/>
    </location>
</feature>
<gene>
    <name type="primary">GRP23</name>
    <name type="ordered locus">At1g10270</name>
    <name type="ORF">F14N23.15</name>
</gene>
<reference key="1">
    <citation type="journal article" date="2000" name="Nature">
        <title>Sequence and analysis of chromosome 1 of the plant Arabidopsis thaliana.</title>
        <authorList>
            <person name="Theologis A."/>
            <person name="Ecker J.R."/>
            <person name="Palm C.J."/>
            <person name="Federspiel N.A."/>
            <person name="Kaul S."/>
            <person name="White O."/>
            <person name="Alonso J."/>
            <person name="Altafi H."/>
            <person name="Araujo R."/>
            <person name="Bowman C.L."/>
            <person name="Brooks S.Y."/>
            <person name="Buehler E."/>
            <person name="Chan A."/>
            <person name="Chao Q."/>
            <person name="Chen H."/>
            <person name="Cheuk R.F."/>
            <person name="Chin C.W."/>
            <person name="Chung M.K."/>
            <person name="Conn L."/>
            <person name="Conway A.B."/>
            <person name="Conway A.R."/>
            <person name="Creasy T.H."/>
            <person name="Dewar K."/>
            <person name="Dunn P."/>
            <person name="Etgu P."/>
            <person name="Feldblyum T.V."/>
            <person name="Feng J.-D."/>
            <person name="Fong B."/>
            <person name="Fujii C.Y."/>
            <person name="Gill J.E."/>
            <person name="Goldsmith A.D."/>
            <person name="Haas B."/>
            <person name="Hansen N.F."/>
            <person name="Hughes B."/>
            <person name="Huizar L."/>
            <person name="Hunter J.L."/>
            <person name="Jenkins J."/>
            <person name="Johnson-Hopson C."/>
            <person name="Khan S."/>
            <person name="Khaykin E."/>
            <person name="Kim C.J."/>
            <person name="Koo H.L."/>
            <person name="Kremenetskaia I."/>
            <person name="Kurtz D.B."/>
            <person name="Kwan A."/>
            <person name="Lam B."/>
            <person name="Langin-Hooper S."/>
            <person name="Lee A."/>
            <person name="Lee J.M."/>
            <person name="Lenz C.A."/>
            <person name="Li J.H."/>
            <person name="Li Y.-P."/>
            <person name="Lin X."/>
            <person name="Liu S.X."/>
            <person name="Liu Z.A."/>
            <person name="Luros J.S."/>
            <person name="Maiti R."/>
            <person name="Marziali A."/>
            <person name="Militscher J."/>
            <person name="Miranda M."/>
            <person name="Nguyen M."/>
            <person name="Nierman W.C."/>
            <person name="Osborne B.I."/>
            <person name="Pai G."/>
            <person name="Peterson J."/>
            <person name="Pham P.K."/>
            <person name="Rizzo M."/>
            <person name="Rooney T."/>
            <person name="Rowley D."/>
            <person name="Sakano H."/>
            <person name="Salzberg S.L."/>
            <person name="Schwartz J.R."/>
            <person name="Shinn P."/>
            <person name="Southwick A.M."/>
            <person name="Sun H."/>
            <person name="Tallon L.J."/>
            <person name="Tambunga G."/>
            <person name="Toriumi M.J."/>
            <person name="Town C.D."/>
            <person name="Utterback T."/>
            <person name="Van Aken S."/>
            <person name="Vaysberg M."/>
            <person name="Vysotskaia V.S."/>
            <person name="Walker M."/>
            <person name="Wu D."/>
            <person name="Yu G."/>
            <person name="Fraser C.M."/>
            <person name="Venter J.C."/>
            <person name="Davis R.W."/>
        </authorList>
    </citation>
    <scope>NUCLEOTIDE SEQUENCE [LARGE SCALE GENOMIC DNA]</scope>
    <source>
        <strain>cv. Columbia</strain>
    </source>
</reference>
<reference key="2">
    <citation type="journal article" date="2017" name="Plant J.">
        <title>Araport11: a complete reannotation of the Arabidopsis thaliana reference genome.</title>
        <authorList>
            <person name="Cheng C.Y."/>
            <person name="Krishnakumar V."/>
            <person name="Chan A.P."/>
            <person name="Thibaud-Nissen F."/>
            <person name="Schobel S."/>
            <person name="Town C.D."/>
        </authorList>
    </citation>
    <scope>GENOME REANNOTATION</scope>
    <source>
        <strain>cv. Columbia</strain>
    </source>
</reference>
<reference key="3">
    <citation type="journal article" date="2004" name="Plant Cell">
        <title>Genome-wide analysis of Arabidopsis pentatricopeptide repeat proteins reveals their essential role in organelle biogenesis.</title>
        <authorList>
            <person name="Lurin C."/>
            <person name="Andres C."/>
            <person name="Aubourg S."/>
            <person name="Bellaoui M."/>
            <person name="Bitton F."/>
            <person name="Bruyere C."/>
            <person name="Caboche M."/>
            <person name="Debast C."/>
            <person name="Gualberto J."/>
            <person name="Hoffmann B."/>
            <person name="Lecharny A."/>
            <person name="Le Ret M."/>
            <person name="Martin-Magniette M.-L."/>
            <person name="Mireau H."/>
            <person name="Peeters N."/>
            <person name="Renou J.-P."/>
            <person name="Szurek B."/>
            <person name="Taconnat L."/>
            <person name="Small I."/>
        </authorList>
    </citation>
    <scope>GENE FAMILY</scope>
</reference>
<reference key="4">
    <citation type="journal article" date="2006" name="Plant Cell">
        <title>Arabidopsis GLUTAMINE-RICH PROTEIN23 is essential for early embryogenesis and encodes a novel nuclear PPR motif protein that interacts with RNA polymerase II subunit III.</title>
        <authorList>
            <person name="Ding Y.-H."/>
            <person name="Liu N.-Y."/>
            <person name="Tang Z.-S."/>
            <person name="Liu J."/>
            <person name="Yang W.-C."/>
        </authorList>
    </citation>
    <scope>FUNCTION</scope>
    <scope>SUBCELLULAR LOCATION</scope>
    <scope>TISSUE SPECIFICITY</scope>
    <scope>DEVELOPMENTAL STAGE</scope>
    <scope>INTERACTION WITH RPB36B</scope>
</reference>